<protein>
    <recommendedName>
        <fullName evidence="1">Co-chaperonin GroES</fullName>
    </recommendedName>
    <alternativeName>
        <fullName evidence="1">10 kDa chaperonin</fullName>
    </alternativeName>
    <alternativeName>
        <fullName evidence="1">Chaperonin-10</fullName>
        <shortName evidence="1">Cpn10</shortName>
    </alternativeName>
</protein>
<feature type="chain" id="PRO_0000174805" description="Co-chaperonin GroES">
    <location>
        <begin position="1"/>
        <end position="103"/>
    </location>
</feature>
<comment type="function">
    <text evidence="1">Together with the chaperonin GroEL, plays an essential role in assisting protein folding. The GroEL-GroES system forms a nano-cage that allows encapsulation of the non-native substrate proteins and provides a physical environment optimized to promote and accelerate protein folding. GroES binds to the apical surface of the GroEL ring, thereby capping the opening of the GroEL channel.</text>
</comment>
<comment type="subunit">
    <text evidence="1">Heptamer of 7 subunits arranged in a ring. Interacts with the chaperonin GroEL.</text>
</comment>
<comment type="subcellular location">
    <subcellularLocation>
        <location evidence="1">Cytoplasm</location>
    </subcellularLocation>
</comment>
<comment type="similarity">
    <text evidence="1">Belongs to the GroES chaperonin family.</text>
</comment>
<organism>
    <name type="scientific">Prochlorococcus marinus subsp. pastoris (strain CCMP1986 / NIES-2087 / MED4)</name>
    <dbReference type="NCBI Taxonomy" id="59919"/>
    <lineage>
        <taxon>Bacteria</taxon>
        <taxon>Bacillati</taxon>
        <taxon>Cyanobacteriota</taxon>
        <taxon>Cyanophyceae</taxon>
        <taxon>Synechococcales</taxon>
        <taxon>Prochlorococcaceae</taxon>
        <taxon>Prochlorococcus</taxon>
    </lineage>
</organism>
<keyword id="KW-0143">Chaperone</keyword>
<keyword id="KW-0963">Cytoplasm</keyword>
<accession>Q7TU43</accession>
<sequence length="103" mass="10789">MAAVSLTVSTVKPLGDRIFIKVSESEEKTAGGILLPDSAKEKPQVGEVAQVGPGKLNDDGSRQTPEVSIGDKVLYSKYAGTDIKLGGDEYVLLSEKDILAVVG</sequence>
<dbReference type="EMBL" id="BX548174">
    <property type="protein sequence ID" value="CAE19896.1"/>
    <property type="molecule type" value="Genomic_DNA"/>
</dbReference>
<dbReference type="RefSeq" id="WP_011133066.1">
    <property type="nucleotide sequence ID" value="NC_005072.1"/>
</dbReference>
<dbReference type="SMR" id="Q7TU43"/>
<dbReference type="STRING" id="59919.PMM1437"/>
<dbReference type="KEGG" id="pmm:PMM1437"/>
<dbReference type="eggNOG" id="COG0234">
    <property type="taxonomic scope" value="Bacteria"/>
</dbReference>
<dbReference type="HOGENOM" id="CLU_132825_2_1_3"/>
<dbReference type="OrthoDB" id="9806791at2"/>
<dbReference type="Proteomes" id="UP000001026">
    <property type="component" value="Chromosome"/>
</dbReference>
<dbReference type="GO" id="GO:0005737">
    <property type="term" value="C:cytoplasm"/>
    <property type="evidence" value="ECO:0007669"/>
    <property type="project" value="UniProtKB-SubCell"/>
</dbReference>
<dbReference type="GO" id="GO:0005524">
    <property type="term" value="F:ATP binding"/>
    <property type="evidence" value="ECO:0007669"/>
    <property type="project" value="InterPro"/>
</dbReference>
<dbReference type="GO" id="GO:0046872">
    <property type="term" value="F:metal ion binding"/>
    <property type="evidence" value="ECO:0007669"/>
    <property type="project" value="TreeGrafter"/>
</dbReference>
<dbReference type="GO" id="GO:0044183">
    <property type="term" value="F:protein folding chaperone"/>
    <property type="evidence" value="ECO:0007669"/>
    <property type="project" value="InterPro"/>
</dbReference>
<dbReference type="GO" id="GO:0051087">
    <property type="term" value="F:protein-folding chaperone binding"/>
    <property type="evidence" value="ECO:0007669"/>
    <property type="project" value="TreeGrafter"/>
</dbReference>
<dbReference type="GO" id="GO:0051082">
    <property type="term" value="F:unfolded protein binding"/>
    <property type="evidence" value="ECO:0007669"/>
    <property type="project" value="TreeGrafter"/>
</dbReference>
<dbReference type="GO" id="GO:0051085">
    <property type="term" value="P:chaperone cofactor-dependent protein refolding"/>
    <property type="evidence" value="ECO:0007669"/>
    <property type="project" value="TreeGrafter"/>
</dbReference>
<dbReference type="CDD" id="cd00320">
    <property type="entry name" value="cpn10"/>
    <property type="match status" value="1"/>
</dbReference>
<dbReference type="FunFam" id="2.30.33.40:FF:000001">
    <property type="entry name" value="10 kDa chaperonin"/>
    <property type="match status" value="1"/>
</dbReference>
<dbReference type="Gene3D" id="2.30.33.40">
    <property type="entry name" value="GroES chaperonin"/>
    <property type="match status" value="1"/>
</dbReference>
<dbReference type="HAMAP" id="MF_00580">
    <property type="entry name" value="CH10"/>
    <property type="match status" value="1"/>
</dbReference>
<dbReference type="InterPro" id="IPR020818">
    <property type="entry name" value="Chaperonin_GroES"/>
</dbReference>
<dbReference type="InterPro" id="IPR037124">
    <property type="entry name" value="Chaperonin_GroES_sf"/>
</dbReference>
<dbReference type="InterPro" id="IPR018369">
    <property type="entry name" value="Chaprnonin_Cpn10_CS"/>
</dbReference>
<dbReference type="InterPro" id="IPR011032">
    <property type="entry name" value="GroES-like_sf"/>
</dbReference>
<dbReference type="NCBIfam" id="NF001530">
    <property type="entry name" value="PRK00364.1-6"/>
    <property type="match status" value="1"/>
</dbReference>
<dbReference type="NCBIfam" id="NF001531">
    <property type="entry name" value="PRK00364.2-2"/>
    <property type="match status" value="1"/>
</dbReference>
<dbReference type="NCBIfam" id="NF001533">
    <property type="entry name" value="PRK00364.2-4"/>
    <property type="match status" value="1"/>
</dbReference>
<dbReference type="NCBIfam" id="NF001534">
    <property type="entry name" value="PRK00364.2-5"/>
    <property type="match status" value="1"/>
</dbReference>
<dbReference type="PANTHER" id="PTHR10772">
    <property type="entry name" value="10 KDA HEAT SHOCK PROTEIN"/>
    <property type="match status" value="1"/>
</dbReference>
<dbReference type="PANTHER" id="PTHR10772:SF58">
    <property type="entry name" value="CO-CHAPERONIN GROES"/>
    <property type="match status" value="1"/>
</dbReference>
<dbReference type="Pfam" id="PF00166">
    <property type="entry name" value="Cpn10"/>
    <property type="match status" value="1"/>
</dbReference>
<dbReference type="PRINTS" id="PR00297">
    <property type="entry name" value="CHAPERONIN10"/>
</dbReference>
<dbReference type="SMART" id="SM00883">
    <property type="entry name" value="Cpn10"/>
    <property type="match status" value="1"/>
</dbReference>
<dbReference type="SUPFAM" id="SSF50129">
    <property type="entry name" value="GroES-like"/>
    <property type="match status" value="1"/>
</dbReference>
<dbReference type="PROSITE" id="PS00681">
    <property type="entry name" value="CHAPERONINS_CPN10"/>
    <property type="match status" value="1"/>
</dbReference>
<proteinExistence type="inferred from homology"/>
<name>CH10_PROMP</name>
<evidence type="ECO:0000255" key="1">
    <source>
        <dbReference type="HAMAP-Rule" id="MF_00580"/>
    </source>
</evidence>
<reference key="1">
    <citation type="journal article" date="2003" name="Nature">
        <title>Genome divergence in two Prochlorococcus ecotypes reflects oceanic niche differentiation.</title>
        <authorList>
            <person name="Rocap G."/>
            <person name="Larimer F.W."/>
            <person name="Lamerdin J.E."/>
            <person name="Malfatti S."/>
            <person name="Chain P."/>
            <person name="Ahlgren N.A."/>
            <person name="Arellano A."/>
            <person name="Coleman M."/>
            <person name="Hauser L."/>
            <person name="Hess W.R."/>
            <person name="Johnson Z.I."/>
            <person name="Land M.L."/>
            <person name="Lindell D."/>
            <person name="Post A.F."/>
            <person name="Regala W."/>
            <person name="Shah M."/>
            <person name="Shaw S.L."/>
            <person name="Steglich C."/>
            <person name="Sullivan M.B."/>
            <person name="Ting C.S."/>
            <person name="Tolonen A."/>
            <person name="Webb E.A."/>
            <person name="Zinser E.R."/>
            <person name="Chisholm S.W."/>
        </authorList>
    </citation>
    <scope>NUCLEOTIDE SEQUENCE [LARGE SCALE GENOMIC DNA]</scope>
    <source>
        <strain>CCMP1986 / NIES-2087 / MED4</strain>
    </source>
</reference>
<gene>
    <name evidence="1" type="primary">groES</name>
    <name evidence="1" type="synonym">groS</name>
    <name type="ordered locus">PMM1437</name>
</gene>